<evidence type="ECO:0000255" key="1">
    <source>
        <dbReference type="HAMAP-Rule" id="MF_01302"/>
    </source>
</evidence>
<evidence type="ECO:0000305" key="2"/>
<protein>
    <recommendedName>
        <fullName evidence="1">Small ribosomal subunit protein uS8</fullName>
    </recommendedName>
    <alternativeName>
        <fullName evidence="2">30S ribosomal protein S8</fullName>
    </alternativeName>
</protein>
<name>RS8_PICTO</name>
<organism>
    <name type="scientific">Picrophilus torridus (strain ATCC 700027 / DSM 9790 / JCM 10055 / NBRC 100828 / KAW 2/3)</name>
    <dbReference type="NCBI Taxonomy" id="1122961"/>
    <lineage>
        <taxon>Archaea</taxon>
        <taxon>Methanobacteriati</taxon>
        <taxon>Thermoplasmatota</taxon>
        <taxon>Thermoplasmata</taxon>
        <taxon>Thermoplasmatales</taxon>
        <taxon>Picrophilaceae</taxon>
        <taxon>Picrophilus</taxon>
    </lineage>
</organism>
<dbReference type="EMBL" id="AE017261">
    <property type="protein sequence ID" value="AAT43240.1"/>
    <property type="molecule type" value="Genomic_DNA"/>
</dbReference>
<dbReference type="RefSeq" id="WP_011177456.1">
    <property type="nucleotide sequence ID" value="NC_005877.1"/>
</dbReference>
<dbReference type="SMR" id="Q6L1B2"/>
<dbReference type="FunCoup" id="Q6L1B2">
    <property type="interactions" value="162"/>
</dbReference>
<dbReference type="STRING" id="263820.PTO0655"/>
<dbReference type="PaxDb" id="263820-PTO0655"/>
<dbReference type="GeneID" id="2844291"/>
<dbReference type="KEGG" id="pto:PTO0655"/>
<dbReference type="eggNOG" id="arCOG04091">
    <property type="taxonomic scope" value="Archaea"/>
</dbReference>
<dbReference type="HOGENOM" id="CLU_098428_1_1_2"/>
<dbReference type="InParanoid" id="Q6L1B2"/>
<dbReference type="OrthoDB" id="5670at2157"/>
<dbReference type="Proteomes" id="UP000000438">
    <property type="component" value="Chromosome"/>
</dbReference>
<dbReference type="GO" id="GO:1990904">
    <property type="term" value="C:ribonucleoprotein complex"/>
    <property type="evidence" value="ECO:0007669"/>
    <property type="project" value="UniProtKB-KW"/>
</dbReference>
<dbReference type="GO" id="GO:0005840">
    <property type="term" value="C:ribosome"/>
    <property type="evidence" value="ECO:0007669"/>
    <property type="project" value="UniProtKB-KW"/>
</dbReference>
<dbReference type="GO" id="GO:0019843">
    <property type="term" value="F:rRNA binding"/>
    <property type="evidence" value="ECO:0007669"/>
    <property type="project" value="UniProtKB-UniRule"/>
</dbReference>
<dbReference type="GO" id="GO:0003735">
    <property type="term" value="F:structural constituent of ribosome"/>
    <property type="evidence" value="ECO:0007669"/>
    <property type="project" value="InterPro"/>
</dbReference>
<dbReference type="GO" id="GO:0006412">
    <property type="term" value="P:translation"/>
    <property type="evidence" value="ECO:0007669"/>
    <property type="project" value="UniProtKB-UniRule"/>
</dbReference>
<dbReference type="FunFam" id="3.30.1490.10:FF:000002">
    <property type="entry name" value="40S ribosomal protein S15a"/>
    <property type="match status" value="1"/>
</dbReference>
<dbReference type="Gene3D" id="3.30.1370.30">
    <property type="match status" value="1"/>
</dbReference>
<dbReference type="Gene3D" id="3.30.1490.10">
    <property type="match status" value="1"/>
</dbReference>
<dbReference type="HAMAP" id="MF_01302_A">
    <property type="entry name" value="Ribosomal_uS8_A"/>
    <property type="match status" value="1"/>
</dbReference>
<dbReference type="InterPro" id="IPR000630">
    <property type="entry name" value="Ribosomal_uS8"/>
</dbReference>
<dbReference type="InterPro" id="IPR047863">
    <property type="entry name" value="Ribosomal_uS8_CS"/>
</dbReference>
<dbReference type="InterPro" id="IPR035987">
    <property type="entry name" value="Ribosomal_uS8_sf"/>
</dbReference>
<dbReference type="NCBIfam" id="NF003115">
    <property type="entry name" value="PRK04034.1"/>
    <property type="match status" value="1"/>
</dbReference>
<dbReference type="PANTHER" id="PTHR11758">
    <property type="entry name" value="40S RIBOSOMAL PROTEIN S15A"/>
    <property type="match status" value="1"/>
</dbReference>
<dbReference type="Pfam" id="PF00410">
    <property type="entry name" value="Ribosomal_S8"/>
    <property type="match status" value="1"/>
</dbReference>
<dbReference type="SUPFAM" id="SSF56047">
    <property type="entry name" value="Ribosomal protein S8"/>
    <property type="match status" value="1"/>
</dbReference>
<dbReference type="PROSITE" id="PS00053">
    <property type="entry name" value="RIBOSOMAL_S8"/>
    <property type="match status" value="1"/>
</dbReference>
<feature type="chain" id="PRO_0000305769" description="Small ribosomal subunit protein uS8">
    <location>
        <begin position="1"/>
        <end position="129"/>
    </location>
</feature>
<reference key="1">
    <citation type="journal article" date="2004" name="Proc. Natl. Acad. Sci. U.S.A.">
        <title>Genome sequence of Picrophilus torridus and its implications for life around pH 0.</title>
        <authorList>
            <person name="Fuetterer O."/>
            <person name="Angelov A."/>
            <person name="Liesegang H."/>
            <person name="Gottschalk G."/>
            <person name="Schleper C."/>
            <person name="Schepers B."/>
            <person name="Dock C."/>
            <person name="Antranikian G."/>
            <person name="Liebl W."/>
        </authorList>
    </citation>
    <scope>NUCLEOTIDE SEQUENCE [LARGE SCALE GENOMIC DNA]</scope>
    <source>
        <strain>ATCC 700027 / DSM 9790 / JCM 10055 / NBRC 100828 / KAW 2/3</strain>
    </source>
</reference>
<accession>Q6L1B2</accession>
<gene>
    <name evidence="1" type="primary">rps8</name>
    <name type="ordered locus">PTO0655</name>
</gene>
<sequence>MNHDPLNDVINTIKNASRIGKSEVIIGPASVMIGRILKVMQDYNYIKSFEVIEEERGGKFRVELSDTINNCGVIKPRLSVKNSNIERYESRYLPAQDFGIIILTTTKGIMSHIEARKLGIGGKLLAYVY</sequence>
<proteinExistence type="inferred from homology"/>
<keyword id="KW-0687">Ribonucleoprotein</keyword>
<keyword id="KW-0689">Ribosomal protein</keyword>
<keyword id="KW-0694">RNA-binding</keyword>
<keyword id="KW-0699">rRNA-binding</keyword>
<comment type="function">
    <text evidence="1">One of the primary rRNA binding proteins, it binds directly to 16S rRNA central domain where it helps coordinate assembly of the platform of the 30S subunit.</text>
</comment>
<comment type="subunit">
    <text evidence="1">Part of the 30S ribosomal subunit.</text>
</comment>
<comment type="similarity">
    <text evidence="1">Belongs to the universal ribosomal protein uS8 family.</text>
</comment>